<reference key="1">
    <citation type="submission" date="2006-08" db="EMBL/GenBank/DDBJ databases">
        <title>Complete sequence of chromosome 1 of Burkholderia cenocepacia HI2424.</title>
        <authorList>
            <person name="Copeland A."/>
            <person name="Lucas S."/>
            <person name="Lapidus A."/>
            <person name="Barry K."/>
            <person name="Detter J.C."/>
            <person name="Glavina del Rio T."/>
            <person name="Hammon N."/>
            <person name="Israni S."/>
            <person name="Pitluck S."/>
            <person name="Chain P."/>
            <person name="Malfatti S."/>
            <person name="Shin M."/>
            <person name="Vergez L."/>
            <person name="Schmutz J."/>
            <person name="Larimer F."/>
            <person name="Land M."/>
            <person name="Hauser L."/>
            <person name="Kyrpides N."/>
            <person name="Kim E."/>
            <person name="LiPuma J.J."/>
            <person name="Gonzalez C.F."/>
            <person name="Konstantinidis K."/>
            <person name="Tiedje J.M."/>
            <person name="Richardson P."/>
        </authorList>
    </citation>
    <scope>NUCLEOTIDE SEQUENCE [LARGE SCALE GENOMIC DNA]</scope>
    <source>
        <strain>HI2424</strain>
    </source>
</reference>
<evidence type="ECO:0000255" key="1">
    <source>
        <dbReference type="HAMAP-Rule" id="MF_00181"/>
    </source>
</evidence>
<accession>A0K9N9</accession>
<comment type="function">
    <text evidence="1">Presumably involved in the processing and regular turnover of intracellular proteins. Catalyzes the removal of unsubstituted N-terminal amino acids from various peptides.</text>
</comment>
<comment type="catalytic activity">
    <reaction evidence="1">
        <text>Release of an N-terminal amino acid, Xaa-|-Yaa-, in which Xaa is preferably Leu, but may be other amino acids including Pro although not Arg or Lys, and Yaa may be Pro. Amino acid amides and methyl esters are also readily hydrolyzed, but rates on arylamides are exceedingly low.</text>
        <dbReference type="EC" id="3.4.11.1"/>
    </reaction>
</comment>
<comment type="catalytic activity">
    <reaction evidence="1">
        <text>Release of an N-terminal amino acid, preferentially leucine, but not glutamic or aspartic acids.</text>
        <dbReference type="EC" id="3.4.11.10"/>
    </reaction>
</comment>
<comment type="cofactor">
    <cofactor evidence="1">
        <name>Mn(2+)</name>
        <dbReference type="ChEBI" id="CHEBI:29035"/>
    </cofactor>
    <text evidence="1">Binds 2 manganese ions per subunit.</text>
</comment>
<comment type="subcellular location">
    <subcellularLocation>
        <location evidence="1">Cytoplasm</location>
    </subcellularLocation>
</comment>
<comment type="similarity">
    <text evidence="1">Belongs to the peptidase M17 family.</text>
</comment>
<feature type="chain" id="PRO_1000019890" description="Probable cytosol aminopeptidase">
    <location>
        <begin position="1"/>
        <end position="503"/>
    </location>
</feature>
<feature type="active site" evidence="1">
    <location>
        <position position="286"/>
    </location>
</feature>
<feature type="active site" evidence="1">
    <location>
        <position position="360"/>
    </location>
</feature>
<feature type="binding site" evidence="1">
    <location>
        <position position="274"/>
    </location>
    <ligand>
        <name>Mn(2+)</name>
        <dbReference type="ChEBI" id="CHEBI:29035"/>
        <label>2</label>
    </ligand>
</feature>
<feature type="binding site" evidence="1">
    <location>
        <position position="279"/>
    </location>
    <ligand>
        <name>Mn(2+)</name>
        <dbReference type="ChEBI" id="CHEBI:29035"/>
        <label>1</label>
    </ligand>
</feature>
<feature type="binding site" evidence="1">
    <location>
        <position position="279"/>
    </location>
    <ligand>
        <name>Mn(2+)</name>
        <dbReference type="ChEBI" id="CHEBI:29035"/>
        <label>2</label>
    </ligand>
</feature>
<feature type="binding site" evidence="1">
    <location>
        <position position="297"/>
    </location>
    <ligand>
        <name>Mn(2+)</name>
        <dbReference type="ChEBI" id="CHEBI:29035"/>
        <label>2</label>
    </ligand>
</feature>
<feature type="binding site" evidence="1">
    <location>
        <position position="356"/>
    </location>
    <ligand>
        <name>Mn(2+)</name>
        <dbReference type="ChEBI" id="CHEBI:29035"/>
        <label>1</label>
    </ligand>
</feature>
<feature type="binding site" evidence="1">
    <location>
        <position position="358"/>
    </location>
    <ligand>
        <name>Mn(2+)</name>
        <dbReference type="ChEBI" id="CHEBI:29035"/>
        <label>1</label>
    </ligand>
</feature>
<feature type="binding site" evidence="1">
    <location>
        <position position="358"/>
    </location>
    <ligand>
        <name>Mn(2+)</name>
        <dbReference type="ChEBI" id="CHEBI:29035"/>
        <label>2</label>
    </ligand>
</feature>
<dbReference type="EC" id="3.4.11.1" evidence="1"/>
<dbReference type="EC" id="3.4.11.10" evidence="1"/>
<dbReference type="EMBL" id="CP000458">
    <property type="protein sequence ID" value="ABK09216.1"/>
    <property type="molecule type" value="Genomic_DNA"/>
</dbReference>
<dbReference type="RefSeq" id="WP_011545980.1">
    <property type="nucleotide sequence ID" value="NC_008542.1"/>
</dbReference>
<dbReference type="SMR" id="A0K9N9"/>
<dbReference type="MEROPS" id="M17.003"/>
<dbReference type="KEGG" id="bch:Bcen2424_2466"/>
<dbReference type="HOGENOM" id="CLU_013734_2_2_4"/>
<dbReference type="GO" id="GO:0005737">
    <property type="term" value="C:cytoplasm"/>
    <property type="evidence" value="ECO:0007669"/>
    <property type="project" value="UniProtKB-SubCell"/>
</dbReference>
<dbReference type="GO" id="GO:0030145">
    <property type="term" value="F:manganese ion binding"/>
    <property type="evidence" value="ECO:0007669"/>
    <property type="project" value="UniProtKB-UniRule"/>
</dbReference>
<dbReference type="GO" id="GO:0070006">
    <property type="term" value="F:metalloaminopeptidase activity"/>
    <property type="evidence" value="ECO:0007669"/>
    <property type="project" value="InterPro"/>
</dbReference>
<dbReference type="GO" id="GO:0006508">
    <property type="term" value="P:proteolysis"/>
    <property type="evidence" value="ECO:0007669"/>
    <property type="project" value="UniProtKB-KW"/>
</dbReference>
<dbReference type="CDD" id="cd00433">
    <property type="entry name" value="Peptidase_M17"/>
    <property type="match status" value="1"/>
</dbReference>
<dbReference type="FunFam" id="3.40.630.10:FF:000004">
    <property type="entry name" value="Probable cytosol aminopeptidase"/>
    <property type="match status" value="1"/>
</dbReference>
<dbReference type="Gene3D" id="3.40.220.10">
    <property type="entry name" value="Leucine Aminopeptidase, subunit E, domain 1"/>
    <property type="match status" value="1"/>
</dbReference>
<dbReference type="Gene3D" id="3.40.630.10">
    <property type="entry name" value="Zn peptidases"/>
    <property type="match status" value="1"/>
</dbReference>
<dbReference type="HAMAP" id="MF_00181">
    <property type="entry name" value="Cytosol_peptidase_M17"/>
    <property type="match status" value="1"/>
</dbReference>
<dbReference type="InterPro" id="IPR011356">
    <property type="entry name" value="Leucine_aapep/pepB"/>
</dbReference>
<dbReference type="InterPro" id="IPR043472">
    <property type="entry name" value="Macro_dom-like"/>
</dbReference>
<dbReference type="InterPro" id="IPR000819">
    <property type="entry name" value="Peptidase_M17_C"/>
</dbReference>
<dbReference type="InterPro" id="IPR023042">
    <property type="entry name" value="Peptidase_M17_leu_NH2_pept"/>
</dbReference>
<dbReference type="InterPro" id="IPR008283">
    <property type="entry name" value="Peptidase_M17_N"/>
</dbReference>
<dbReference type="NCBIfam" id="NF002073">
    <property type="entry name" value="PRK00913.1-2"/>
    <property type="match status" value="1"/>
</dbReference>
<dbReference type="NCBIfam" id="NF002074">
    <property type="entry name" value="PRK00913.1-4"/>
    <property type="match status" value="1"/>
</dbReference>
<dbReference type="NCBIfam" id="NF002077">
    <property type="entry name" value="PRK00913.2-4"/>
    <property type="match status" value="1"/>
</dbReference>
<dbReference type="NCBIfam" id="NF002083">
    <property type="entry name" value="PRK00913.3-5"/>
    <property type="match status" value="1"/>
</dbReference>
<dbReference type="PANTHER" id="PTHR11963:SF23">
    <property type="entry name" value="CYTOSOL AMINOPEPTIDASE"/>
    <property type="match status" value="1"/>
</dbReference>
<dbReference type="PANTHER" id="PTHR11963">
    <property type="entry name" value="LEUCINE AMINOPEPTIDASE-RELATED"/>
    <property type="match status" value="1"/>
</dbReference>
<dbReference type="Pfam" id="PF00883">
    <property type="entry name" value="Peptidase_M17"/>
    <property type="match status" value="1"/>
</dbReference>
<dbReference type="Pfam" id="PF02789">
    <property type="entry name" value="Peptidase_M17_N"/>
    <property type="match status" value="1"/>
</dbReference>
<dbReference type="PRINTS" id="PR00481">
    <property type="entry name" value="LAMNOPPTDASE"/>
</dbReference>
<dbReference type="SUPFAM" id="SSF52949">
    <property type="entry name" value="Macro domain-like"/>
    <property type="match status" value="1"/>
</dbReference>
<dbReference type="SUPFAM" id="SSF53187">
    <property type="entry name" value="Zn-dependent exopeptidases"/>
    <property type="match status" value="1"/>
</dbReference>
<dbReference type="PROSITE" id="PS00631">
    <property type="entry name" value="CYTOSOL_AP"/>
    <property type="match status" value="1"/>
</dbReference>
<protein>
    <recommendedName>
        <fullName evidence="1">Probable cytosol aminopeptidase</fullName>
        <ecNumber evidence="1">3.4.11.1</ecNumber>
    </recommendedName>
    <alternativeName>
        <fullName evidence="1">Leucine aminopeptidase</fullName>
        <shortName evidence="1">LAP</shortName>
        <ecNumber evidence="1">3.4.11.10</ecNumber>
    </alternativeName>
    <alternativeName>
        <fullName evidence="1">Leucyl aminopeptidase</fullName>
    </alternativeName>
</protein>
<keyword id="KW-0031">Aminopeptidase</keyword>
<keyword id="KW-0963">Cytoplasm</keyword>
<keyword id="KW-0378">Hydrolase</keyword>
<keyword id="KW-0464">Manganese</keyword>
<keyword id="KW-0479">Metal-binding</keyword>
<keyword id="KW-0645">Protease</keyword>
<proteinExistence type="inferred from homology"/>
<gene>
    <name evidence="1" type="primary">pepA</name>
    <name type="ordered locus">Bcen2424_2466</name>
</gene>
<organism>
    <name type="scientific">Burkholderia cenocepacia (strain HI2424)</name>
    <dbReference type="NCBI Taxonomy" id="331272"/>
    <lineage>
        <taxon>Bacteria</taxon>
        <taxon>Pseudomonadati</taxon>
        <taxon>Pseudomonadota</taxon>
        <taxon>Betaproteobacteria</taxon>
        <taxon>Burkholderiales</taxon>
        <taxon>Burkholderiaceae</taxon>
        <taxon>Burkholderia</taxon>
        <taxon>Burkholderia cepacia complex</taxon>
    </lineage>
</organism>
<name>AMPA_BURCH</name>
<sequence length="503" mass="53020">MDFSIKGCDWSKGEAKGFLTGKSDCIVLGIFEAQTLSGAALDIDTATKGLISRVVKAGDMDGKRGKTLFLHEVSGIGASRVLLVGLGKQDAFNQKAYNDAATTAWRALLATKVVQVTFSLAQLPVDERSSDWGVRAAILALRNETYRFTQMKSKPEPASHTLKRVVFSVDPADEKAAKVAIKQAVALANGMDLTRDLGNLPGNVCTPIYLGNTAKKIAKDWGLKAEVLGLKQIQALKMGSFLSVARASVEPPQFIVLHYQGAAAKAAPVVLVGKGITFDTGGISLKPGEGMDEMKYDMCGAGSVLGTMRAVAEMGLKINVVAIVPTCENMPGGNATKPGDIVTSMKGLTIEVLNTDAEGRLILCDALTYAERFKPAAVIDVATLTGACVIALGGHNSGLFSTNDALAGELLDASREANDPAWRMPLDDEYQDQLKSNFADLANIGGRPAGAVTAACFLSRFTESYPWAHLDIAGTAWKGGAAKGATGRPVPLLAQFLIDRAGQ</sequence>